<protein>
    <recommendedName>
        <fullName>FMRFamide-18</fullName>
    </recommendedName>
    <alternativeName>
        <fullName evidence="3">LucFMRFamide-18</fullName>
    </alternativeName>
</protein>
<accession>P85462</accession>
<accession>P85465</accession>
<feature type="peptide" id="PRO_0000371759" description="FMRFamide-18">
    <location>
        <begin position="1"/>
        <end position="12"/>
    </location>
</feature>
<feature type="modified residue" description="Phenylalanine amide" evidence="2">
    <location>
        <position position="12"/>
    </location>
</feature>
<feature type="sequence variant" description="In strain: Bangladesh." evidence="2">
    <original>A</original>
    <variation>S</variation>
    <location>
        <position position="6"/>
    </location>
</feature>
<sequence length="12" mass="1403">TPPQPADNFIRF</sequence>
<reference evidence="4" key="1">
    <citation type="journal article" date="2009" name="Gen. Comp. Endocrinol.">
        <title>Extended FMRFamides in dipteran insects: conservative expression in the neuroendocrine system is accompanied by rapid sequence evolution.</title>
        <authorList>
            <person name="Rahman M.M."/>
            <person name="Fromm B."/>
            <person name="Neupert S."/>
            <person name="Kreusch S."/>
            <person name="Predel R."/>
        </authorList>
    </citation>
    <scope>PROTEIN SEQUENCE</scope>
    <scope>TISSUE SPECIFICITY</scope>
    <scope>MASS SPECTROMETRY</scope>
    <scope>AMIDATION AT PHE-12</scope>
    <scope>VARIANT SER-6</scope>
    <source>
        <strain evidence="2">Bangladesh</strain>
        <strain evidence="2">Goondiwindi</strain>
        <tissue evidence="2">Dorsal ganglionic sheath</tissue>
    </source>
</reference>
<organism>
    <name type="scientific">Lucilia cuprina</name>
    <name type="common">Green bottle fly</name>
    <name type="synonym">Australian sheep blowfly</name>
    <dbReference type="NCBI Taxonomy" id="7375"/>
    <lineage>
        <taxon>Eukaryota</taxon>
        <taxon>Metazoa</taxon>
        <taxon>Ecdysozoa</taxon>
        <taxon>Arthropoda</taxon>
        <taxon>Hexapoda</taxon>
        <taxon>Insecta</taxon>
        <taxon>Pterygota</taxon>
        <taxon>Neoptera</taxon>
        <taxon>Endopterygota</taxon>
        <taxon>Diptera</taxon>
        <taxon>Brachycera</taxon>
        <taxon>Muscomorpha</taxon>
        <taxon>Oestroidea</taxon>
        <taxon>Calliphoridae</taxon>
        <taxon>Luciliinae</taxon>
        <taxon>Lucilia</taxon>
    </lineage>
</organism>
<proteinExistence type="evidence at protein level"/>
<keyword id="KW-0027">Amidation</keyword>
<keyword id="KW-0903">Direct protein sequencing</keyword>
<keyword id="KW-0527">Neuropeptide</keyword>
<keyword id="KW-0964">Secreted</keyword>
<name>FAR18_LUCCU</name>
<dbReference type="GO" id="GO:0005576">
    <property type="term" value="C:extracellular region"/>
    <property type="evidence" value="ECO:0007669"/>
    <property type="project" value="UniProtKB-SubCell"/>
</dbReference>
<dbReference type="GO" id="GO:0007218">
    <property type="term" value="P:neuropeptide signaling pathway"/>
    <property type="evidence" value="ECO:0007669"/>
    <property type="project" value="UniProtKB-KW"/>
</dbReference>
<evidence type="ECO:0000255" key="1"/>
<evidence type="ECO:0000269" key="2">
    <source>
    </source>
</evidence>
<evidence type="ECO:0000303" key="3">
    <source>
    </source>
</evidence>
<evidence type="ECO:0000305" key="4"/>
<comment type="subcellular location">
    <subcellularLocation>
        <location evidence="4">Secreted</location>
    </subcellularLocation>
</comment>
<comment type="tissue specificity">
    <text evidence="2">Detected in the thoracic perisympathetic organs in larvae, and the dorsal ganglionic sheath in adults (at protein level).</text>
</comment>
<comment type="mass spectrometry" mass="1401.7" method="MALDI" evidence="2">
    <text>Strain Goondiwindi.</text>
</comment>
<comment type="mass spectrometry" mass="1417.72" method="MALDI" evidence="2">
    <text>Strain Bangladesh.</text>
</comment>
<comment type="similarity">
    <text evidence="1">Belongs to the FARP (FMRFamide related peptide) family.</text>
</comment>